<organism>
    <name type="scientific">African swine fever virus (isolate Pig/Kenya/KEN-50/1950)</name>
    <name type="common">ASFV</name>
    <dbReference type="NCBI Taxonomy" id="561445"/>
    <lineage>
        <taxon>Viruses</taxon>
        <taxon>Varidnaviria</taxon>
        <taxon>Bamfordvirae</taxon>
        <taxon>Nucleocytoviricota</taxon>
        <taxon>Pokkesviricetes</taxon>
        <taxon>Asfuvirales</taxon>
        <taxon>Asfarviridae</taxon>
        <taxon>Asfivirus</taxon>
        <taxon>African swine fever virus</taxon>
    </lineage>
</organism>
<organismHost>
    <name type="scientific">Ornithodoros</name>
    <name type="common">relapsing fever ticks</name>
    <dbReference type="NCBI Taxonomy" id="6937"/>
</organismHost>
<organismHost>
    <name type="scientific">Phacochoerus aethiopicus</name>
    <name type="common">Warthog</name>
    <dbReference type="NCBI Taxonomy" id="85517"/>
</organismHost>
<organismHost>
    <name type="scientific">Phacochoerus africanus</name>
    <name type="common">Warthog</name>
    <dbReference type="NCBI Taxonomy" id="41426"/>
</organismHost>
<organismHost>
    <name type="scientific">Potamochoerus larvatus</name>
    <name type="common">Bushpig</name>
    <dbReference type="NCBI Taxonomy" id="273792"/>
</organismHost>
<organismHost>
    <name type="scientific">Sus scrofa</name>
    <name type="common">Pig</name>
    <dbReference type="NCBI Taxonomy" id="9823"/>
</organismHost>
<dbReference type="EC" id="3.6.4.-" evidence="1"/>
<dbReference type="EMBL" id="AY261360">
    <property type="status" value="NOT_ANNOTATED_CDS"/>
    <property type="molecule type" value="Genomic_DNA"/>
</dbReference>
<dbReference type="Proteomes" id="UP000000861">
    <property type="component" value="Segment"/>
</dbReference>
<dbReference type="GO" id="GO:0044423">
    <property type="term" value="C:virion component"/>
    <property type="evidence" value="ECO:0007669"/>
    <property type="project" value="UniProtKB-KW"/>
</dbReference>
<dbReference type="GO" id="GO:0005524">
    <property type="term" value="F:ATP binding"/>
    <property type="evidence" value="ECO:0007669"/>
    <property type="project" value="UniProtKB-KW"/>
</dbReference>
<dbReference type="GO" id="GO:0016787">
    <property type="term" value="F:hydrolase activity"/>
    <property type="evidence" value="ECO:0007669"/>
    <property type="project" value="UniProtKB-KW"/>
</dbReference>
<dbReference type="GO" id="GO:0003724">
    <property type="term" value="F:RNA helicase activity"/>
    <property type="evidence" value="ECO:0007669"/>
    <property type="project" value="UniProtKB-EC"/>
</dbReference>
<dbReference type="GO" id="GO:0006281">
    <property type="term" value="P:DNA repair"/>
    <property type="evidence" value="ECO:0007669"/>
    <property type="project" value="TreeGrafter"/>
</dbReference>
<dbReference type="GO" id="GO:0006353">
    <property type="term" value="P:DNA-templated transcription termination"/>
    <property type="evidence" value="ECO:0007669"/>
    <property type="project" value="UniProtKB-KW"/>
</dbReference>
<dbReference type="GO" id="GO:0031297">
    <property type="term" value="P:replication fork processing"/>
    <property type="evidence" value="ECO:0007669"/>
    <property type="project" value="TreeGrafter"/>
</dbReference>
<dbReference type="Gene3D" id="3.40.50.300">
    <property type="entry name" value="P-loop containing nucleotide triphosphate hydrolases"/>
    <property type="match status" value="1"/>
</dbReference>
<dbReference type="Gene3D" id="3.40.50.10810">
    <property type="entry name" value="Tandem AAA-ATPase domain"/>
    <property type="match status" value="1"/>
</dbReference>
<dbReference type="InterPro" id="IPR014001">
    <property type="entry name" value="Helicase_ATP-bd"/>
</dbReference>
<dbReference type="InterPro" id="IPR001650">
    <property type="entry name" value="Helicase_C-like"/>
</dbReference>
<dbReference type="InterPro" id="IPR027417">
    <property type="entry name" value="P-loop_NTPase"/>
</dbReference>
<dbReference type="InterPro" id="IPR038718">
    <property type="entry name" value="SNF2-like_sf"/>
</dbReference>
<dbReference type="InterPro" id="IPR000330">
    <property type="entry name" value="SNF2_N"/>
</dbReference>
<dbReference type="PANTHER" id="PTHR45766">
    <property type="entry name" value="DNA ANNEALING HELICASE AND ENDONUCLEASE ZRANB3 FAMILY MEMBER"/>
    <property type="match status" value="1"/>
</dbReference>
<dbReference type="PANTHER" id="PTHR45766:SF6">
    <property type="entry name" value="SWI_SNF-RELATED MATRIX-ASSOCIATED ACTIN-DEPENDENT REGULATOR OF CHROMATIN SUBFAMILY A-LIKE PROTEIN 1"/>
    <property type="match status" value="1"/>
</dbReference>
<dbReference type="Pfam" id="PF00271">
    <property type="entry name" value="Helicase_C"/>
    <property type="match status" value="1"/>
</dbReference>
<dbReference type="Pfam" id="PF00176">
    <property type="entry name" value="SNF2-rel_dom"/>
    <property type="match status" value="1"/>
</dbReference>
<dbReference type="SMART" id="SM00487">
    <property type="entry name" value="DEXDc"/>
    <property type="match status" value="1"/>
</dbReference>
<dbReference type="SMART" id="SM00490">
    <property type="entry name" value="HELICc"/>
    <property type="match status" value="1"/>
</dbReference>
<dbReference type="SUPFAM" id="SSF52540">
    <property type="entry name" value="P-loop containing nucleoside triphosphate hydrolases"/>
    <property type="match status" value="2"/>
</dbReference>
<reference key="1">
    <citation type="submission" date="2003-03" db="EMBL/GenBank/DDBJ databases">
        <title>African swine fever virus genomes.</title>
        <authorList>
            <person name="Kutish G.F."/>
            <person name="Rock D.L."/>
        </authorList>
    </citation>
    <scope>NUCLEOTIDE SEQUENCE [LARGE SCALE GENOMIC DNA]</scope>
</reference>
<feature type="chain" id="PRO_0000373121" description="Termination factor NPH-I homolog">
    <location>
        <begin position="1"/>
        <end position="706"/>
    </location>
</feature>
<feature type="domain" description="Helicase ATP-binding" evidence="3">
    <location>
        <begin position="62"/>
        <end position="227"/>
    </location>
</feature>
<feature type="domain" description="Helicase C-terminal" evidence="3">
    <location>
        <begin position="378"/>
        <end position="599"/>
    </location>
</feature>
<feature type="short sequence motif" description="DEAH box" evidence="3">
    <location>
        <begin position="168"/>
        <end position="171"/>
    </location>
</feature>
<feature type="binding site" evidence="3">
    <location>
        <begin position="75"/>
        <end position="82"/>
    </location>
    <ligand>
        <name>ATP</name>
        <dbReference type="ChEBI" id="CHEBI:30616"/>
    </ligand>
</feature>
<accession>P0C9B3</accession>
<proteinExistence type="inferred from homology"/>
<keyword id="KW-0067">ATP-binding</keyword>
<keyword id="KW-0347">Helicase</keyword>
<keyword id="KW-0378">Hydrolase</keyword>
<keyword id="KW-0547">Nucleotide-binding</keyword>
<keyword id="KW-0804">Transcription</keyword>
<keyword id="KW-0805">Transcription regulation</keyword>
<keyword id="KW-0806">Transcription termination</keyword>
<keyword id="KW-0946">Virion</keyword>
<sequence length="706" mass="80328">MSCVHNNTSFPVQIEAYLKEVFEKYKELQESKDTSLTARFARALKYYQFLIYTAFSDPKFGIGQGENTRGLLIYHQMGMGKTILSLSLAISLSHIYNPILIAPKSLHSNFQQSLLKLIKLLYPETTDPSKELQKISRRFRFVSLDAYNMGQQIIKAGGSLNGCLLIVDEAHNLFRGIINSANDKTNARQLYNNIMQAKNIRILFLTGTPCSKDPFEMVPCFNMLSGRILLPLHYERFYTAYVNKTTNSPLNADKLLNRLVGMISYAGNQNELNKLFPTELPLIIEKVEMSPEQYRQYLLARDVENAEKHASSGMHEKINTAALCLPGSEQESGSSYYVRSRMISIFASEMLTIKEDEKLSEAVQQLPKEAFTETSSPKIVCMLKNIKTSPGPVLIYSQFVELGLHVVARFLEIEGYQCLQPLKVLEEGHNAILLHKDGKDLMVKNFAEDEPTHTLVLSSKITRFTLITGKILSKERDMIQQLWNSPLNIHGEVIKILLVSKTGAEGLDLKYGRQVHILEPYWDKAREDQVKARIIRIGSHDALPPEEKTVQPFLYIAVANQKMFYSIPEGSQEQKTIDERFHERGLEKSHLNSAFRDLLKRAAIECAFNGESGCLMCQPTNALLFHENFERDLRLPNPCQPLVKTEVKAYSISYEGKQFFYQKNKGVGLGYTFYEYNPIIKAYIEIKPSNPLYIKLIKHVQAGTTV</sequence>
<evidence type="ECO:0000250" key="1">
    <source>
        <dbReference type="UniProtKB" id="P05807"/>
    </source>
</evidence>
<evidence type="ECO:0000250" key="2">
    <source>
        <dbReference type="UniProtKB" id="Q89581"/>
    </source>
</evidence>
<evidence type="ECO:0000255" key="3">
    <source>
        <dbReference type="PROSITE-ProRule" id="PRU00541"/>
    </source>
</evidence>
<evidence type="ECO:0000305" key="4"/>
<gene>
    <name type="ordered locus">Ken-134</name>
</gene>
<protein>
    <recommendedName>
        <fullName evidence="2">Termination factor NPH-I homolog</fullName>
        <ecNumber evidence="1">3.6.4.-</ecNumber>
    </recommendedName>
</protein>
<comment type="function">
    <text evidence="1">Putative DNA-dependent ATPase required for providing the needed energy to achieve the termination of early transcripts.</text>
</comment>
<comment type="subunit">
    <text evidence="2">Part of the viral DNA-directed RNA polymerase that consists of 8 polII-like subunits (RPB1, RPB2, RPB3, RPB5, RPB6, RPB7, RPB9, RPB10), a capping enzyme and a termination factor.</text>
</comment>
<comment type="subcellular location">
    <subcellularLocation>
        <location evidence="2">Virion</location>
    </subcellularLocation>
    <text evidence="2">Found in association with viral nucleoid.</text>
</comment>
<comment type="induction">
    <text evidence="4">Expressed in the late phase of the viral replicative cycle.</text>
</comment>
<comment type="similarity">
    <text evidence="4">Belongs to the DEAD box helicase family. DEAH subfamily.</text>
</comment>
<name>TFNPH_ASFK5</name>